<comment type="function">
    <text evidence="1">One of the primary rRNA binding proteins, it binds directly near the 3'-end of the 23S rRNA, where it nucleates assembly of the 50S subunit.</text>
</comment>
<comment type="subunit">
    <text evidence="1">Part of the 50S ribosomal subunit. Forms a cluster with proteins L14 and L19.</text>
</comment>
<comment type="similarity">
    <text evidence="1">Belongs to the universal ribosomal protein uL3 family.</text>
</comment>
<organism>
    <name type="scientific">Mycolicibacterium smegmatis (strain ATCC 700084 / mc(2)155)</name>
    <name type="common">Mycobacterium smegmatis</name>
    <dbReference type="NCBI Taxonomy" id="246196"/>
    <lineage>
        <taxon>Bacteria</taxon>
        <taxon>Bacillati</taxon>
        <taxon>Actinomycetota</taxon>
        <taxon>Actinomycetes</taxon>
        <taxon>Mycobacteriales</taxon>
        <taxon>Mycobacteriaceae</taxon>
        <taxon>Mycolicibacterium</taxon>
    </lineage>
</organism>
<feature type="chain" id="PRO_1000052088" description="Large ribosomal subunit protein uL3">
    <location>
        <begin position="1"/>
        <end position="217"/>
    </location>
</feature>
<feature type="strand" evidence="4">
    <location>
        <begin position="5"/>
        <end position="17"/>
    </location>
</feature>
<feature type="strand" evidence="4">
    <location>
        <begin position="23"/>
        <end position="30"/>
    </location>
</feature>
<feature type="strand" evidence="4">
    <location>
        <begin position="34"/>
        <end position="40"/>
    </location>
</feature>
<feature type="turn" evidence="4">
    <location>
        <begin position="42"/>
        <end position="45"/>
    </location>
</feature>
<feature type="strand" evidence="4">
    <location>
        <begin position="49"/>
        <end position="56"/>
    </location>
</feature>
<feature type="helix" evidence="4">
    <location>
        <begin position="59"/>
        <end position="61"/>
    </location>
</feature>
<feature type="helix" evidence="4">
    <location>
        <begin position="64"/>
        <end position="73"/>
    </location>
</feature>
<feature type="strand" evidence="4">
    <location>
        <begin position="78"/>
        <end position="85"/>
    </location>
</feature>
<feature type="helix" evidence="4">
    <location>
        <begin position="90"/>
        <end position="94"/>
    </location>
</feature>
<feature type="helix" evidence="4">
    <location>
        <begin position="103"/>
        <end position="106"/>
    </location>
</feature>
<feature type="strand" evidence="3">
    <location>
        <begin position="111"/>
        <end position="117"/>
    </location>
</feature>
<feature type="strand" evidence="4">
    <location>
        <begin position="123"/>
        <end position="125"/>
    </location>
</feature>
<feature type="helix" evidence="4">
    <location>
        <begin position="127"/>
        <end position="130"/>
    </location>
</feature>
<feature type="strand" evidence="3">
    <location>
        <begin position="137"/>
        <end position="140"/>
    </location>
</feature>
<feature type="strand" evidence="3">
    <location>
        <begin position="145"/>
        <end position="147"/>
    </location>
</feature>
<feature type="strand" evidence="3">
    <location>
        <begin position="154"/>
        <end position="157"/>
    </location>
</feature>
<feature type="strand" evidence="6">
    <location>
        <begin position="168"/>
        <end position="171"/>
    </location>
</feature>
<feature type="strand" evidence="5">
    <location>
        <begin position="173"/>
        <end position="180"/>
    </location>
</feature>
<feature type="strand" evidence="4">
    <location>
        <begin position="182"/>
        <end position="186"/>
    </location>
</feature>
<feature type="turn" evidence="4">
    <location>
        <begin position="187"/>
        <end position="190"/>
    </location>
</feature>
<feature type="strand" evidence="4">
    <location>
        <begin position="191"/>
        <end position="196"/>
    </location>
</feature>
<feature type="strand" evidence="4">
    <location>
        <begin position="205"/>
        <end position="210"/>
    </location>
</feature>
<feature type="turn" evidence="3">
    <location>
        <begin position="212"/>
        <end position="214"/>
    </location>
</feature>
<name>RL3_MYCS2</name>
<sequence>MARKGILGTKLGMTQVFDENNKVVPVTVVKAGPNVVTRIRTTERDGYSAVQLAYGEISPRKVIKPVAGQFAAAGVNPRRHVAELRLDDEAAVAEYEVGQELTAEIFSDGAYVDVTGTSKGKGFAGTMKRHGFRGQGAAHGAQAVHRRPGSIGGCATPGRVFKGTRMSGRMGNDRVTTQNLKVHKVDAENGVLLIKGAIPGRNGGLVVVRSAIKRGEK</sequence>
<accession>A0QSD1</accession>
<accession>I7FGA9</accession>
<evidence type="ECO:0000255" key="1">
    <source>
        <dbReference type="HAMAP-Rule" id="MF_01325"/>
    </source>
</evidence>
<evidence type="ECO:0000305" key="2"/>
<evidence type="ECO:0007829" key="3">
    <source>
        <dbReference type="PDB" id="5O60"/>
    </source>
</evidence>
<evidence type="ECO:0007829" key="4">
    <source>
        <dbReference type="PDB" id="5XYM"/>
    </source>
</evidence>
<evidence type="ECO:0007829" key="5">
    <source>
        <dbReference type="PDB" id="5ZET"/>
    </source>
</evidence>
<evidence type="ECO:0007829" key="6">
    <source>
        <dbReference type="PDB" id="6DZP"/>
    </source>
</evidence>
<reference key="1">
    <citation type="submission" date="2006-10" db="EMBL/GenBank/DDBJ databases">
        <authorList>
            <person name="Fleischmann R.D."/>
            <person name="Dodson R.J."/>
            <person name="Haft D.H."/>
            <person name="Merkel J.S."/>
            <person name="Nelson W.C."/>
            <person name="Fraser C.M."/>
        </authorList>
    </citation>
    <scope>NUCLEOTIDE SEQUENCE [LARGE SCALE GENOMIC DNA]</scope>
    <source>
        <strain>ATCC 700084 / mc(2)155</strain>
    </source>
</reference>
<reference key="2">
    <citation type="journal article" date="2007" name="Genome Biol.">
        <title>Interrupted coding sequences in Mycobacterium smegmatis: authentic mutations or sequencing errors?</title>
        <authorList>
            <person name="Deshayes C."/>
            <person name="Perrodou E."/>
            <person name="Gallien S."/>
            <person name="Euphrasie D."/>
            <person name="Schaeffer C."/>
            <person name="Van-Dorsselaer A."/>
            <person name="Poch O."/>
            <person name="Lecompte O."/>
            <person name="Reyrat J.-M."/>
        </authorList>
    </citation>
    <scope>NUCLEOTIDE SEQUENCE [LARGE SCALE GENOMIC DNA]</scope>
    <source>
        <strain>ATCC 700084 / mc(2)155</strain>
    </source>
</reference>
<reference key="3">
    <citation type="journal article" date="2009" name="Genome Res.">
        <title>Ortho-proteogenomics: multiple proteomes investigation through orthology and a new MS-based protocol.</title>
        <authorList>
            <person name="Gallien S."/>
            <person name="Perrodou E."/>
            <person name="Carapito C."/>
            <person name="Deshayes C."/>
            <person name="Reyrat J.-M."/>
            <person name="Van Dorsselaer A."/>
            <person name="Poch O."/>
            <person name="Schaeffer C."/>
            <person name="Lecompte O."/>
        </authorList>
    </citation>
    <scope>NUCLEOTIDE SEQUENCE [LARGE SCALE GENOMIC DNA]</scope>
    <scope>IDENTIFICATION BY MASS SPECTROMETRY [LARGE SCALE ANALYSIS]</scope>
    <source>
        <strain>ATCC 700084 / mc(2)155</strain>
    </source>
</reference>
<dbReference type="EMBL" id="CP000480">
    <property type="protein sequence ID" value="ABK75373.1"/>
    <property type="molecule type" value="Genomic_DNA"/>
</dbReference>
<dbReference type="EMBL" id="CP001663">
    <property type="protein sequence ID" value="AFP37873.1"/>
    <property type="molecule type" value="Genomic_DNA"/>
</dbReference>
<dbReference type="RefSeq" id="WP_003892823.1">
    <property type="nucleotide sequence ID" value="NZ_SIJM01000016.1"/>
</dbReference>
<dbReference type="RefSeq" id="YP_885819.1">
    <property type="nucleotide sequence ID" value="NC_008596.1"/>
</dbReference>
<dbReference type="PDB" id="5O60">
    <property type="method" value="EM"/>
    <property type="resolution" value="3.20 A"/>
    <property type="chains" value="D=1-217"/>
</dbReference>
<dbReference type="PDB" id="5O61">
    <property type="method" value="EM"/>
    <property type="resolution" value="3.31 A"/>
    <property type="chains" value="D=1-217"/>
</dbReference>
<dbReference type="PDB" id="5XYM">
    <property type="method" value="EM"/>
    <property type="resolution" value="3.08 A"/>
    <property type="chains" value="D=1-217"/>
</dbReference>
<dbReference type="PDB" id="5ZEB">
    <property type="method" value="EM"/>
    <property type="resolution" value="3.40 A"/>
    <property type="chains" value="D=1-217"/>
</dbReference>
<dbReference type="PDB" id="5ZEP">
    <property type="method" value="EM"/>
    <property type="resolution" value="3.40 A"/>
    <property type="chains" value="D=1-217"/>
</dbReference>
<dbReference type="PDB" id="5ZET">
    <property type="method" value="EM"/>
    <property type="resolution" value="3.20 A"/>
    <property type="chains" value="D=1-217"/>
</dbReference>
<dbReference type="PDB" id="6DZI">
    <property type="method" value="EM"/>
    <property type="resolution" value="3.46 A"/>
    <property type="chains" value="D=2-215"/>
</dbReference>
<dbReference type="PDB" id="6DZP">
    <property type="method" value="EM"/>
    <property type="resolution" value="3.42 A"/>
    <property type="chains" value="D=1-217"/>
</dbReference>
<dbReference type="PDB" id="7S0S">
    <property type="method" value="EM"/>
    <property type="resolution" value="3.05 A"/>
    <property type="chains" value="E=2-215"/>
</dbReference>
<dbReference type="PDB" id="7XAM">
    <property type="method" value="EM"/>
    <property type="resolution" value="2.80 A"/>
    <property type="chains" value="D=1-217"/>
</dbReference>
<dbReference type="PDB" id="7Y41">
    <property type="method" value="EM"/>
    <property type="resolution" value="4.10 A"/>
    <property type="chains" value="D=1-217"/>
</dbReference>
<dbReference type="PDB" id="8FR8">
    <property type="method" value="EM"/>
    <property type="resolution" value="2.76 A"/>
    <property type="chains" value="L=2-215"/>
</dbReference>
<dbReference type="PDB" id="8KAB">
    <property type="method" value="EM"/>
    <property type="resolution" value="3.30 A"/>
    <property type="chains" value="D=1-217"/>
</dbReference>
<dbReference type="PDB" id="8V9J">
    <property type="method" value="EM"/>
    <property type="resolution" value="3.10 A"/>
    <property type="chains" value="D=1-217"/>
</dbReference>
<dbReference type="PDB" id="8V9K">
    <property type="method" value="EM"/>
    <property type="resolution" value="3.10 A"/>
    <property type="chains" value="D=1-217"/>
</dbReference>
<dbReference type="PDB" id="8V9L">
    <property type="method" value="EM"/>
    <property type="resolution" value="3.00 A"/>
    <property type="chains" value="D=1-217"/>
</dbReference>
<dbReference type="PDB" id="8VIO">
    <property type="method" value="EM"/>
    <property type="resolution" value="3.26 A"/>
    <property type="chains" value="D=1-217"/>
</dbReference>
<dbReference type="PDB" id="8VK0">
    <property type="method" value="EM"/>
    <property type="resolution" value="3.14 A"/>
    <property type="chains" value="D=1-217"/>
</dbReference>
<dbReference type="PDB" id="8VK7">
    <property type="method" value="EM"/>
    <property type="resolution" value="3.09 A"/>
    <property type="chains" value="D=1-217"/>
</dbReference>
<dbReference type="PDB" id="8VKI">
    <property type="method" value="EM"/>
    <property type="resolution" value="2.96 A"/>
    <property type="chains" value="D=1-217"/>
</dbReference>
<dbReference type="PDB" id="8VKW">
    <property type="method" value="EM"/>
    <property type="resolution" value="3.44 A"/>
    <property type="chains" value="D=1-217"/>
</dbReference>
<dbReference type="PDB" id="8VR4">
    <property type="method" value="EM"/>
    <property type="resolution" value="2.80 A"/>
    <property type="chains" value="D=1-217"/>
</dbReference>
<dbReference type="PDB" id="8VR8">
    <property type="method" value="EM"/>
    <property type="resolution" value="3.25 A"/>
    <property type="chains" value="D=1-217"/>
</dbReference>
<dbReference type="PDB" id="8VRL">
    <property type="method" value="EM"/>
    <property type="resolution" value="3.33 A"/>
    <property type="chains" value="D=1-217"/>
</dbReference>
<dbReference type="PDB" id="8WHX">
    <property type="method" value="EM"/>
    <property type="resolution" value="2.80 A"/>
    <property type="chains" value="F=1-217"/>
</dbReference>
<dbReference type="PDB" id="8WHY">
    <property type="method" value="EM"/>
    <property type="resolution" value="2.70 A"/>
    <property type="chains" value="F=1-217"/>
</dbReference>
<dbReference type="PDB" id="8WI7">
    <property type="method" value="EM"/>
    <property type="resolution" value="3.50 A"/>
    <property type="chains" value="F=1-217"/>
</dbReference>
<dbReference type="PDB" id="8WI8">
    <property type="method" value="EM"/>
    <property type="resolution" value="2.70 A"/>
    <property type="chains" value="F=1-217"/>
</dbReference>
<dbReference type="PDB" id="8WIB">
    <property type="method" value="EM"/>
    <property type="resolution" value="3.50 A"/>
    <property type="chains" value="F=1-217"/>
</dbReference>
<dbReference type="PDB" id="8WIC">
    <property type="method" value="EM"/>
    <property type="resolution" value="3.50 A"/>
    <property type="chains" value="F=1-217"/>
</dbReference>
<dbReference type="PDB" id="8XZ3">
    <property type="method" value="EM"/>
    <property type="resolution" value="3.60 A"/>
    <property type="chains" value="D=2-215"/>
</dbReference>
<dbReference type="PDBsum" id="5O60"/>
<dbReference type="PDBsum" id="5O61"/>
<dbReference type="PDBsum" id="5XYM"/>
<dbReference type="PDBsum" id="5ZEB"/>
<dbReference type="PDBsum" id="5ZEP"/>
<dbReference type="PDBsum" id="5ZET"/>
<dbReference type="PDBsum" id="6DZI"/>
<dbReference type="PDBsum" id="6DZP"/>
<dbReference type="PDBsum" id="7S0S"/>
<dbReference type="PDBsum" id="7XAM"/>
<dbReference type="PDBsum" id="7Y41"/>
<dbReference type="PDBsum" id="8FR8"/>
<dbReference type="PDBsum" id="8KAB"/>
<dbReference type="PDBsum" id="8V9J"/>
<dbReference type="PDBsum" id="8V9K"/>
<dbReference type="PDBsum" id="8V9L"/>
<dbReference type="PDBsum" id="8VIO"/>
<dbReference type="PDBsum" id="8VK0"/>
<dbReference type="PDBsum" id="8VK7"/>
<dbReference type="PDBsum" id="8VKI"/>
<dbReference type="PDBsum" id="8VKW"/>
<dbReference type="PDBsum" id="8VR4"/>
<dbReference type="PDBsum" id="8VR8"/>
<dbReference type="PDBsum" id="8VRL"/>
<dbReference type="PDBsum" id="8WHX"/>
<dbReference type="PDBsum" id="8WHY"/>
<dbReference type="PDBsum" id="8WI7"/>
<dbReference type="PDBsum" id="8WI8"/>
<dbReference type="PDBsum" id="8WIB"/>
<dbReference type="PDBsum" id="8WIC"/>
<dbReference type="PDBsum" id="8XZ3"/>
<dbReference type="EMDB" id="EMD-29397"/>
<dbReference type="EMDB" id="EMD-33096"/>
<dbReference type="EMDB" id="EMD-33599"/>
<dbReference type="EMDB" id="EMD-37007"/>
<dbReference type="EMDB" id="EMD-3750"/>
<dbReference type="EMDB" id="EMD-3751"/>
<dbReference type="EMDB" id="EMD-37551"/>
<dbReference type="EMDB" id="EMD-37552"/>
<dbReference type="EMDB" id="EMD-37559"/>
<dbReference type="EMDB" id="EMD-37560"/>
<dbReference type="EMDB" id="EMD-37562"/>
<dbReference type="EMDB" id="EMD-37563"/>
<dbReference type="EMDB" id="EMD-38788"/>
<dbReference type="EMDB" id="EMD-43074"/>
<dbReference type="EMDB" id="EMD-43075"/>
<dbReference type="EMDB" id="EMD-43076"/>
<dbReference type="EMDB" id="EMD-43267"/>
<dbReference type="EMDB" id="EMD-43294"/>
<dbReference type="EMDB" id="EMD-43305"/>
<dbReference type="EMDB" id="EMD-43317"/>
<dbReference type="EMDB" id="EMD-43333"/>
<dbReference type="EMDB" id="EMD-43476"/>
<dbReference type="EMDB" id="EMD-43477"/>
<dbReference type="EMDB" id="EMD-43484"/>
<dbReference type="EMDB" id="EMD-6789"/>
<dbReference type="EMDB" id="EMD-6920"/>
<dbReference type="EMDB" id="EMD-6921"/>
<dbReference type="EMDB" id="EMD-6922"/>
<dbReference type="EMDB" id="EMD-8932"/>
<dbReference type="EMDB" id="EMD-8937"/>
<dbReference type="SMR" id="A0QSD1"/>
<dbReference type="IntAct" id="A0QSD1">
    <property type="interactions" value="2"/>
</dbReference>
<dbReference type="STRING" id="246196.MSMEG_1436"/>
<dbReference type="PaxDb" id="246196-MSMEI_1400"/>
<dbReference type="GeneID" id="93456280"/>
<dbReference type="KEGG" id="msb:LJ00_07165"/>
<dbReference type="KEGG" id="msg:MSMEI_1400"/>
<dbReference type="KEGG" id="msm:MSMEG_1436"/>
<dbReference type="PATRIC" id="fig|246196.19.peg.1422"/>
<dbReference type="eggNOG" id="COG0087">
    <property type="taxonomic scope" value="Bacteria"/>
</dbReference>
<dbReference type="OrthoDB" id="9806135at2"/>
<dbReference type="Proteomes" id="UP000000757">
    <property type="component" value="Chromosome"/>
</dbReference>
<dbReference type="Proteomes" id="UP000006158">
    <property type="component" value="Chromosome"/>
</dbReference>
<dbReference type="GO" id="GO:0022625">
    <property type="term" value="C:cytosolic large ribosomal subunit"/>
    <property type="evidence" value="ECO:0007669"/>
    <property type="project" value="TreeGrafter"/>
</dbReference>
<dbReference type="GO" id="GO:0019843">
    <property type="term" value="F:rRNA binding"/>
    <property type="evidence" value="ECO:0007669"/>
    <property type="project" value="UniProtKB-UniRule"/>
</dbReference>
<dbReference type="GO" id="GO:0003735">
    <property type="term" value="F:structural constituent of ribosome"/>
    <property type="evidence" value="ECO:0007669"/>
    <property type="project" value="InterPro"/>
</dbReference>
<dbReference type="GO" id="GO:0006412">
    <property type="term" value="P:translation"/>
    <property type="evidence" value="ECO:0007669"/>
    <property type="project" value="UniProtKB-UniRule"/>
</dbReference>
<dbReference type="FunFam" id="2.40.30.10:FF:000004">
    <property type="entry name" value="50S ribosomal protein L3"/>
    <property type="match status" value="1"/>
</dbReference>
<dbReference type="FunFam" id="3.30.160.810:FF:000001">
    <property type="entry name" value="50S ribosomal protein L3"/>
    <property type="match status" value="1"/>
</dbReference>
<dbReference type="Gene3D" id="3.30.160.810">
    <property type="match status" value="1"/>
</dbReference>
<dbReference type="Gene3D" id="2.40.30.10">
    <property type="entry name" value="Translation factors"/>
    <property type="match status" value="1"/>
</dbReference>
<dbReference type="HAMAP" id="MF_01325_B">
    <property type="entry name" value="Ribosomal_uL3_B"/>
    <property type="match status" value="1"/>
</dbReference>
<dbReference type="InterPro" id="IPR000597">
    <property type="entry name" value="Ribosomal_uL3"/>
</dbReference>
<dbReference type="InterPro" id="IPR019927">
    <property type="entry name" value="Ribosomal_uL3_bac/org-type"/>
</dbReference>
<dbReference type="InterPro" id="IPR019926">
    <property type="entry name" value="Ribosomal_uL3_CS"/>
</dbReference>
<dbReference type="InterPro" id="IPR009000">
    <property type="entry name" value="Transl_B-barrel_sf"/>
</dbReference>
<dbReference type="NCBIfam" id="TIGR03625">
    <property type="entry name" value="L3_bact"/>
    <property type="match status" value="1"/>
</dbReference>
<dbReference type="PANTHER" id="PTHR11229">
    <property type="entry name" value="50S RIBOSOMAL PROTEIN L3"/>
    <property type="match status" value="1"/>
</dbReference>
<dbReference type="PANTHER" id="PTHR11229:SF16">
    <property type="entry name" value="LARGE RIBOSOMAL SUBUNIT PROTEIN UL3C"/>
    <property type="match status" value="1"/>
</dbReference>
<dbReference type="Pfam" id="PF00297">
    <property type="entry name" value="Ribosomal_L3"/>
    <property type="match status" value="1"/>
</dbReference>
<dbReference type="SUPFAM" id="SSF50447">
    <property type="entry name" value="Translation proteins"/>
    <property type="match status" value="1"/>
</dbReference>
<dbReference type="PROSITE" id="PS00474">
    <property type="entry name" value="RIBOSOMAL_L3"/>
    <property type="match status" value="1"/>
</dbReference>
<gene>
    <name evidence="1" type="primary">rplC</name>
    <name type="ordered locus">MSMEG_1436</name>
    <name type="ordered locus">MSMEI_1400</name>
</gene>
<keyword id="KW-0002">3D-structure</keyword>
<keyword id="KW-1185">Reference proteome</keyword>
<keyword id="KW-0687">Ribonucleoprotein</keyword>
<keyword id="KW-0689">Ribosomal protein</keyword>
<keyword id="KW-0694">RNA-binding</keyword>
<keyword id="KW-0699">rRNA-binding</keyword>
<proteinExistence type="evidence at protein level"/>
<protein>
    <recommendedName>
        <fullName evidence="1">Large ribosomal subunit protein uL3</fullName>
    </recommendedName>
    <alternativeName>
        <fullName evidence="2">50S ribosomal protein L3</fullName>
    </alternativeName>
</protein>